<name>PEPT_SHIB3</name>
<protein>
    <recommendedName>
        <fullName evidence="1">Peptidase T</fullName>
        <ecNumber evidence="1">3.4.11.4</ecNumber>
    </recommendedName>
    <alternativeName>
        <fullName evidence="1">Aminotripeptidase</fullName>
        <shortName evidence="1">Tripeptidase</shortName>
    </alternativeName>
    <alternativeName>
        <fullName evidence="1">Tripeptide aminopeptidase</fullName>
    </alternativeName>
</protein>
<proteinExistence type="inferred from homology"/>
<sequence length="408" mass="44826">MDKLLERFLNYVSLDTQSKAGVRQVPSTEGQWKLLHLLKEQLEEMGLINVTLSEKGTLMATLPANVPGDIPAIGFISHVDTSPDCSGKNVNPQIVENYRGGDIALGIGDEVLSPVMFPVLHQLLGQTLITTDGKTLLGADDKAGIAEIMTALAVLQQKNIPHGDIRVAFTPDEEVGKGAKHFDVDAFDARWAYTVDGGGVGELEFENFNAASVNIKIVGNNVHPGTAKGVMVNALSLAARIHAEVPADESPEMTEGYEGFYHLAGMKGTVERADMHYIIRDFDRKQFEARKCKMMEIAKKVGKGLHPDCYIELVIEDSYYNMREKVVEHPHILDIAQQAMRDCDIEPELKPIRGGTDGAQLSFMGLPCPNLFTGGYNYHGKHEFVTLEGMEKAVQVIVRIAELTAQRK</sequence>
<feature type="chain" id="PRO_1000129046" description="Peptidase T">
    <location>
        <begin position="1"/>
        <end position="408"/>
    </location>
</feature>
<feature type="active site" evidence="1">
    <location>
        <position position="80"/>
    </location>
</feature>
<feature type="active site" description="Proton acceptor" evidence="1">
    <location>
        <position position="173"/>
    </location>
</feature>
<feature type="binding site" evidence="1">
    <location>
        <position position="78"/>
    </location>
    <ligand>
        <name>Zn(2+)</name>
        <dbReference type="ChEBI" id="CHEBI:29105"/>
        <label>1</label>
    </ligand>
</feature>
<feature type="binding site" evidence="1">
    <location>
        <position position="140"/>
    </location>
    <ligand>
        <name>Zn(2+)</name>
        <dbReference type="ChEBI" id="CHEBI:29105"/>
        <label>1</label>
    </ligand>
</feature>
<feature type="binding site" evidence="1">
    <location>
        <position position="140"/>
    </location>
    <ligand>
        <name>Zn(2+)</name>
        <dbReference type="ChEBI" id="CHEBI:29105"/>
        <label>2</label>
    </ligand>
</feature>
<feature type="binding site" evidence="1">
    <location>
        <position position="174"/>
    </location>
    <ligand>
        <name>Zn(2+)</name>
        <dbReference type="ChEBI" id="CHEBI:29105"/>
        <label>2</label>
    </ligand>
</feature>
<feature type="binding site" evidence="1">
    <location>
        <position position="196"/>
    </location>
    <ligand>
        <name>Zn(2+)</name>
        <dbReference type="ChEBI" id="CHEBI:29105"/>
        <label>1</label>
    </ligand>
</feature>
<feature type="binding site" evidence="1">
    <location>
        <position position="379"/>
    </location>
    <ligand>
        <name>Zn(2+)</name>
        <dbReference type="ChEBI" id="CHEBI:29105"/>
        <label>2</label>
    </ligand>
</feature>
<accession>B2TZ80</accession>
<evidence type="ECO:0000255" key="1">
    <source>
        <dbReference type="HAMAP-Rule" id="MF_00550"/>
    </source>
</evidence>
<keyword id="KW-0031">Aminopeptidase</keyword>
<keyword id="KW-0963">Cytoplasm</keyword>
<keyword id="KW-0378">Hydrolase</keyword>
<keyword id="KW-0479">Metal-binding</keyword>
<keyword id="KW-0482">Metalloprotease</keyword>
<keyword id="KW-0645">Protease</keyword>
<keyword id="KW-1185">Reference proteome</keyword>
<keyword id="KW-0862">Zinc</keyword>
<reference key="1">
    <citation type="submission" date="2008-05" db="EMBL/GenBank/DDBJ databases">
        <title>Complete sequence of Shigella boydii serotype 18 strain BS512.</title>
        <authorList>
            <person name="Rasko D.A."/>
            <person name="Rosovitz M."/>
            <person name="Maurelli A.T."/>
            <person name="Myers G."/>
            <person name="Seshadri R."/>
            <person name="Cer R."/>
            <person name="Jiang L."/>
            <person name="Ravel J."/>
            <person name="Sebastian Y."/>
        </authorList>
    </citation>
    <scope>NUCLEOTIDE SEQUENCE [LARGE SCALE GENOMIC DNA]</scope>
    <source>
        <strain>CDC 3083-94 / BS512</strain>
    </source>
</reference>
<gene>
    <name evidence="1" type="primary">pepT</name>
    <name type="ordered locus">SbBS512_E1305</name>
</gene>
<organism>
    <name type="scientific">Shigella boydii serotype 18 (strain CDC 3083-94 / BS512)</name>
    <dbReference type="NCBI Taxonomy" id="344609"/>
    <lineage>
        <taxon>Bacteria</taxon>
        <taxon>Pseudomonadati</taxon>
        <taxon>Pseudomonadota</taxon>
        <taxon>Gammaproteobacteria</taxon>
        <taxon>Enterobacterales</taxon>
        <taxon>Enterobacteriaceae</taxon>
        <taxon>Shigella</taxon>
    </lineage>
</organism>
<dbReference type="EC" id="3.4.11.4" evidence="1"/>
<dbReference type="EMBL" id="CP001063">
    <property type="protein sequence ID" value="ACD07045.1"/>
    <property type="molecule type" value="Genomic_DNA"/>
</dbReference>
<dbReference type="RefSeq" id="WP_000359437.1">
    <property type="nucleotide sequence ID" value="NC_010658.1"/>
</dbReference>
<dbReference type="SMR" id="B2TZ80"/>
<dbReference type="STRING" id="344609.SbBS512_E1305"/>
<dbReference type="MEROPS" id="M20.003"/>
<dbReference type="KEGG" id="sbc:SbBS512_E1305"/>
<dbReference type="HOGENOM" id="CLU_053676_0_0_6"/>
<dbReference type="Proteomes" id="UP000001030">
    <property type="component" value="Chromosome"/>
</dbReference>
<dbReference type="GO" id="GO:0005829">
    <property type="term" value="C:cytosol"/>
    <property type="evidence" value="ECO:0007669"/>
    <property type="project" value="TreeGrafter"/>
</dbReference>
<dbReference type="GO" id="GO:0008237">
    <property type="term" value="F:metallopeptidase activity"/>
    <property type="evidence" value="ECO:0007669"/>
    <property type="project" value="UniProtKB-KW"/>
</dbReference>
<dbReference type="GO" id="GO:0045148">
    <property type="term" value="F:tripeptide aminopeptidase activity"/>
    <property type="evidence" value="ECO:0007669"/>
    <property type="project" value="UniProtKB-UniRule"/>
</dbReference>
<dbReference type="GO" id="GO:0008270">
    <property type="term" value="F:zinc ion binding"/>
    <property type="evidence" value="ECO:0007669"/>
    <property type="project" value="UniProtKB-UniRule"/>
</dbReference>
<dbReference type="GO" id="GO:0043171">
    <property type="term" value="P:peptide catabolic process"/>
    <property type="evidence" value="ECO:0007669"/>
    <property type="project" value="UniProtKB-UniRule"/>
</dbReference>
<dbReference type="GO" id="GO:0006508">
    <property type="term" value="P:proteolysis"/>
    <property type="evidence" value="ECO:0007669"/>
    <property type="project" value="UniProtKB-UniRule"/>
</dbReference>
<dbReference type="CDD" id="cd03892">
    <property type="entry name" value="M20_peptT"/>
    <property type="match status" value="1"/>
</dbReference>
<dbReference type="FunFam" id="3.30.70.360:FF:000002">
    <property type="entry name" value="Peptidase T"/>
    <property type="match status" value="1"/>
</dbReference>
<dbReference type="Gene3D" id="3.30.70.360">
    <property type="match status" value="1"/>
</dbReference>
<dbReference type="Gene3D" id="3.40.630.10">
    <property type="entry name" value="Zn peptidases"/>
    <property type="match status" value="1"/>
</dbReference>
<dbReference type="HAMAP" id="MF_00550">
    <property type="entry name" value="Aminopeptidase_M20"/>
    <property type="match status" value="1"/>
</dbReference>
<dbReference type="InterPro" id="IPR001261">
    <property type="entry name" value="ArgE/DapE_CS"/>
</dbReference>
<dbReference type="InterPro" id="IPR036264">
    <property type="entry name" value="Bact_exopeptidase_dim_dom"/>
</dbReference>
<dbReference type="InterPro" id="IPR002933">
    <property type="entry name" value="Peptidase_M20"/>
</dbReference>
<dbReference type="InterPro" id="IPR011650">
    <property type="entry name" value="Peptidase_M20_dimer"/>
</dbReference>
<dbReference type="InterPro" id="IPR010161">
    <property type="entry name" value="Peptidase_M20B"/>
</dbReference>
<dbReference type="NCBIfam" id="TIGR01882">
    <property type="entry name" value="peptidase-T"/>
    <property type="match status" value="1"/>
</dbReference>
<dbReference type="NCBIfam" id="NF003976">
    <property type="entry name" value="PRK05469.1"/>
    <property type="match status" value="1"/>
</dbReference>
<dbReference type="NCBIfam" id="NF009920">
    <property type="entry name" value="PRK13381.1"/>
    <property type="match status" value="1"/>
</dbReference>
<dbReference type="PANTHER" id="PTHR42994">
    <property type="entry name" value="PEPTIDASE T"/>
    <property type="match status" value="1"/>
</dbReference>
<dbReference type="PANTHER" id="PTHR42994:SF1">
    <property type="entry name" value="PEPTIDASE T"/>
    <property type="match status" value="1"/>
</dbReference>
<dbReference type="Pfam" id="PF07687">
    <property type="entry name" value="M20_dimer"/>
    <property type="match status" value="1"/>
</dbReference>
<dbReference type="Pfam" id="PF01546">
    <property type="entry name" value="Peptidase_M20"/>
    <property type="match status" value="1"/>
</dbReference>
<dbReference type="PIRSF" id="PIRSF037215">
    <property type="entry name" value="Peptidase_M20B"/>
    <property type="match status" value="1"/>
</dbReference>
<dbReference type="SUPFAM" id="SSF55031">
    <property type="entry name" value="Bacterial exopeptidase dimerisation domain"/>
    <property type="match status" value="1"/>
</dbReference>
<dbReference type="SUPFAM" id="SSF53187">
    <property type="entry name" value="Zn-dependent exopeptidases"/>
    <property type="match status" value="1"/>
</dbReference>
<dbReference type="PROSITE" id="PS00758">
    <property type="entry name" value="ARGE_DAPE_CPG2_1"/>
    <property type="match status" value="1"/>
</dbReference>
<dbReference type="PROSITE" id="PS00759">
    <property type="entry name" value="ARGE_DAPE_CPG2_2"/>
    <property type="match status" value="1"/>
</dbReference>
<comment type="function">
    <text evidence="1">Cleaves the N-terminal amino acid of tripeptides.</text>
</comment>
<comment type="catalytic activity">
    <reaction evidence="1">
        <text>Release of the N-terminal residue from a tripeptide.</text>
        <dbReference type="EC" id="3.4.11.4"/>
    </reaction>
</comment>
<comment type="cofactor">
    <cofactor evidence="1">
        <name>Zn(2+)</name>
        <dbReference type="ChEBI" id="CHEBI:29105"/>
    </cofactor>
    <text evidence="1">Binds 2 Zn(2+) ions per subunit.</text>
</comment>
<comment type="subcellular location">
    <subcellularLocation>
        <location evidence="1">Cytoplasm</location>
    </subcellularLocation>
</comment>
<comment type="similarity">
    <text evidence="1">Belongs to the peptidase M20B family.</text>
</comment>